<evidence type="ECO:0000250" key="1"/>
<evidence type="ECO:0000255" key="2">
    <source>
        <dbReference type="HAMAP-Rule" id="MF_01493"/>
    </source>
</evidence>
<evidence type="ECO:0000256" key="3">
    <source>
        <dbReference type="SAM" id="MobiDB-lite"/>
    </source>
</evidence>
<evidence type="ECO:0000269" key="4">
    <source>
    </source>
</evidence>
<evidence type="ECO:0000269" key="5">
    <source>
    </source>
</evidence>
<evidence type="ECO:0000269" key="6">
    <source>
    </source>
</evidence>
<evidence type="ECO:0000305" key="7"/>
<reference key="1">
    <citation type="journal article" date="2003" name="Nature">
        <title>Genome sequence of Bacillus cereus and comparative analysis with Bacillus anthracis.</title>
        <authorList>
            <person name="Ivanova N."/>
            <person name="Sorokin A."/>
            <person name="Anderson I."/>
            <person name="Galleron N."/>
            <person name="Candelon B."/>
            <person name="Kapatral V."/>
            <person name="Bhattacharyya A."/>
            <person name="Reznik G."/>
            <person name="Mikhailova N."/>
            <person name="Lapidus A."/>
            <person name="Chu L."/>
            <person name="Mazur M."/>
            <person name="Goltsman E."/>
            <person name="Larsen N."/>
            <person name="D'Souza M."/>
            <person name="Walunas T."/>
            <person name="Grechkin Y."/>
            <person name="Pusch G."/>
            <person name="Haselkorn R."/>
            <person name="Fonstein M."/>
            <person name="Ehrlich S.D."/>
            <person name="Overbeek R."/>
            <person name="Kyrpides N.C."/>
        </authorList>
    </citation>
    <scope>NUCLEOTIDE SEQUENCE [LARGE SCALE GENOMIC DNA]</scope>
    <source>
        <strain>ATCC 14579 / DSM 31 / CCUG 7414 / JCM 2152 / NBRC 15305 / NCIMB 9373 / NCTC 2599 / NRRL B-3711</strain>
    </source>
</reference>
<reference key="2">
    <citation type="journal article" date="2010" name="Appl. Environ. Microbiol.">
        <title>Differential involvement of the five RNA helicases in adaptation of Bacillus cereus ATCC 14579 to low growth temperatures.</title>
        <authorList>
            <person name="Pandiani F."/>
            <person name="Brillard J."/>
            <person name="Bornard I."/>
            <person name="Michaud C."/>
            <person name="Chamot S."/>
            <person name="Nguyen-the C."/>
            <person name="Broussolle V."/>
        </authorList>
    </citation>
    <scope>INDUCTION</scope>
    <scope>DISRUPTION PHENOTYPE</scope>
    <source>
        <strain>ATCC 14579 / DSM 31 / CCUG 7414 / JCM 2152 / NBRC 15305 / NCIMB 9373 / NCTC 2599 / NRRL B-3711</strain>
    </source>
</reference>
<reference key="3">
    <citation type="journal article" date="2010" name="FEMS Microbiol. Lett.">
        <title>Insertional mutagenesis reveals genes involved in Bacillus cereus ATCC 14579 growth at low temperature.</title>
        <authorList>
            <person name="Broussolle V."/>
            <person name="Pandiani F."/>
            <person name="Haddad N."/>
            <person name="Michaud C."/>
            <person name="Carlin F."/>
            <person name="Nguyen-the C."/>
            <person name="Brillard J."/>
        </authorList>
    </citation>
    <scope>INDUCTION</scope>
    <scope>DISRUPTION PHENOTYPE</scope>
    <source>
        <strain>ATCC 14579 / DSM 31 / CCUG 7414 / JCM 2152 / NBRC 15305 / NCIMB 9373 / NCTC 2599 / NRRL B-3711</strain>
    </source>
</reference>
<reference key="4">
    <citation type="journal article" date="2011" name="Appl. Environ. Microbiol.">
        <title>Role of the five RNA helicases in the adaptive response of Bacillus cereus ATCC 14579 cells to temperature, pH, and oxidative stresses.</title>
        <authorList>
            <person name="Pandiani F."/>
            <person name="Chamot S."/>
            <person name="Brillard J."/>
            <person name="Carlin F."/>
            <person name="Nguyen-the C."/>
            <person name="Broussolle V."/>
        </authorList>
    </citation>
    <scope>FUNCTION</scope>
    <scope>INDUCTION</scope>
    <scope>DISRUPTION PHENOTYPE</scope>
    <source>
        <strain>ATCC 14579 / DSM 31 / CCUG 7414 / JCM 2152 / NBRC 15305 / NCIMB 9373 / NCTC 2599 / NRRL B-3711</strain>
    </source>
</reference>
<gene>
    <name evidence="2" type="primary">cshA</name>
    <name type="ordered locus">BC_0259</name>
</gene>
<proteinExistence type="evidence at transcript level"/>
<name>CSHA_BACCR</name>
<sequence length="533" mass="59457">MTTFRELGLSDSLLQSVESMGFEEATPIQAETIPHALQGKDIIGQAQTGTGKTAAFGLPLLDKVDTHKESVQGIVIAPTRELAIQVGEELYKIGKHKRVRILPIYGGQDINRQIRALKKHPHIIVGTPGRILDHINRKTLRLQNVETVVLDEADEMLNMGFIEDIEAILTDVPETHQTLLFSATMPDPIRRIAERFMTEPQHIKVKAKEVTMPNIQQFYLEVQEKKKFDVLTRLLDIQSPELAIVFGRTKRRVDELSEALNLRGYAAEGIHGDLTQAKRMSVLRKFKEGSIEVLVATDVAARGLDISGVTHVYNFDIPQDPESYVHRIGRTGRAGKKGIAMLFVTPRESGQLKNIERTTKRKMDRMDAPTLDEALEGQQRLIAEKLQSTIENENLAYYKRIAEEMLEENDSVTVVAAALKMMTKEPDTTPIALTSEPPVVSRGGGSKKRGGNGGGYRDGNRNRSRDGRGGGDGRNRDRNRDGRNRDGNRDRNRDGNRDRNRDGGSRGRRGEGQGRPGSSNGRGERKHHSRPQA</sequence>
<organism>
    <name type="scientific">Bacillus cereus (strain ATCC 14579 / DSM 31 / CCUG 7414 / JCM 2152 / NBRC 15305 / NCIMB 9373 / NCTC 2599 / NRRL B-3711)</name>
    <dbReference type="NCBI Taxonomy" id="226900"/>
    <lineage>
        <taxon>Bacteria</taxon>
        <taxon>Bacillati</taxon>
        <taxon>Bacillota</taxon>
        <taxon>Bacilli</taxon>
        <taxon>Bacillales</taxon>
        <taxon>Bacillaceae</taxon>
        <taxon>Bacillus</taxon>
        <taxon>Bacillus cereus group</taxon>
    </lineage>
</organism>
<accession>Q81IT9</accession>
<comment type="function">
    <text evidence="1 6">DEAD-box RNA helicase possibly involved in RNA degradation. May work in conjunction with the cold shock proteins to ensure proper initiation of transcription at low and optimal temperatures. Unwinds dsRNA in both 5'- and 3'-directions and shows RNA-dependent ATPase activity (By similarity). Probably has a somewhat redundant function with cshB, as cshA can partially complement the growth effects of a cshB deletion. Plays a role in adaptation to cold, oxididant and pH stress.</text>
</comment>
<comment type="catalytic activity">
    <reaction evidence="2">
        <text>ATP + H2O = ADP + phosphate + H(+)</text>
        <dbReference type="Rhea" id="RHEA:13065"/>
        <dbReference type="ChEBI" id="CHEBI:15377"/>
        <dbReference type="ChEBI" id="CHEBI:15378"/>
        <dbReference type="ChEBI" id="CHEBI:30616"/>
        <dbReference type="ChEBI" id="CHEBI:43474"/>
        <dbReference type="ChEBI" id="CHEBI:456216"/>
        <dbReference type="EC" id="3.6.4.13"/>
    </reaction>
</comment>
<comment type="subunit">
    <text evidence="2">Oligomerizes, may be a member of the RNA degradosome.</text>
</comment>
<comment type="subcellular location">
    <subcellularLocation>
        <location evidence="2">Cytoplasm</location>
    </subcellularLocation>
</comment>
<comment type="induction">
    <text evidence="4 5 6">More highly expressed in lag than stationary phase at 10, 30 or 37 degrees Celsius. Induced at 10 degrees Celsius. Encoded by a monocistronic operon.</text>
</comment>
<comment type="disruption phenotype">
    <text evidence="4 5 6">Longer lag phase and slight reduction in growth rate between 20 and 45 degrees Celsius, no growth at 10 degrees Celsius. At 15 degrees Celsius the unusually long cells form large aggregates and are curved at the pole, with incompletely divided, thickened internal membranes. Decreased growth in the presence of H(2)O(2), diamide and at acidic and basic pH.</text>
</comment>
<comment type="similarity">
    <text evidence="2">Belongs to the DEAD box helicase family. CshA subfamily.</text>
</comment>
<comment type="sequence caution" evidence="7">
    <conflict type="frameshift">
        <sequence resource="EMBL-CDS" id="AAP07328"/>
    </conflict>
</comment>
<protein>
    <recommendedName>
        <fullName evidence="2">DEAD-box ATP-dependent RNA helicase CshA</fullName>
        <ecNumber evidence="2">3.6.4.13</ecNumber>
    </recommendedName>
</protein>
<keyword id="KW-0067">ATP-binding</keyword>
<keyword id="KW-0963">Cytoplasm</keyword>
<keyword id="KW-0347">Helicase</keyword>
<keyword id="KW-0378">Hydrolase</keyword>
<keyword id="KW-0547">Nucleotide-binding</keyword>
<keyword id="KW-1185">Reference proteome</keyword>
<keyword id="KW-0694">RNA-binding</keyword>
<keyword id="KW-0346">Stress response</keyword>
<feature type="chain" id="PRO_0000280051" description="DEAD-box ATP-dependent RNA helicase CshA">
    <location>
        <begin position="1"/>
        <end position="533"/>
    </location>
</feature>
<feature type="domain" description="Helicase ATP-binding" evidence="2">
    <location>
        <begin position="33"/>
        <end position="203"/>
    </location>
</feature>
<feature type="domain" description="Helicase C-terminal" evidence="2">
    <location>
        <begin position="214"/>
        <end position="374"/>
    </location>
</feature>
<feature type="region of interest" description="Disordered" evidence="3">
    <location>
        <begin position="428"/>
        <end position="533"/>
    </location>
</feature>
<feature type="short sequence motif" description="Q motif">
    <location>
        <begin position="2"/>
        <end position="30"/>
    </location>
</feature>
<feature type="short sequence motif" description="DEAD box">
    <location>
        <begin position="151"/>
        <end position="154"/>
    </location>
</feature>
<feature type="compositionally biased region" description="Basic and acidic residues" evidence="3">
    <location>
        <begin position="458"/>
        <end position="512"/>
    </location>
</feature>
<feature type="compositionally biased region" description="Basic residues" evidence="3">
    <location>
        <begin position="524"/>
        <end position="533"/>
    </location>
</feature>
<feature type="binding site" evidence="2">
    <location>
        <begin position="46"/>
        <end position="53"/>
    </location>
    <ligand>
        <name>ATP</name>
        <dbReference type="ChEBI" id="CHEBI:30616"/>
    </ligand>
</feature>
<dbReference type="EC" id="3.6.4.13" evidence="2"/>
<dbReference type="EMBL" id="AE016877">
    <property type="protein sequence ID" value="AAP07328.1"/>
    <property type="status" value="ALT_FRAME"/>
    <property type="molecule type" value="Genomic_DNA"/>
</dbReference>
<dbReference type="RefSeq" id="NP_830127.1">
    <property type="nucleotide sequence ID" value="NC_004722.1"/>
</dbReference>
<dbReference type="RefSeq" id="WP_000206592.1">
    <property type="nucleotide sequence ID" value="NZ_CP138336.1"/>
</dbReference>
<dbReference type="RefSeq" id="WP_000505235.1">
    <property type="nucleotide sequence ID" value="NC_004722.1"/>
</dbReference>
<dbReference type="SMR" id="Q81IT9"/>
<dbReference type="STRING" id="226900.BC_0259"/>
<dbReference type="MetOSite" id="Q81IT9"/>
<dbReference type="DNASU" id="1202612"/>
<dbReference type="KEGG" id="bce:BC0259"/>
<dbReference type="PATRIC" id="fig|226900.8.peg.259"/>
<dbReference type="HOGENOM" id="CLU_003041_21_0_9"/>
<dbReference type="OrthoDB" id="9805696at2"/>
<dbReference type="Proteomes" id="UP000001417">
    <property type="component" value="Chromosome"/>
</dbReference>
<dbReference type="GO" id="GO:0043590">
    <property type="term" value="C:bacterial nucleoid"/>
    <property type="evidence" value="ECO:0000250"/>
    <property type="project" value="UniProtKB"/>
</dbReference>
<dbReference type="GO" id="GO:0005829">
    <property type="term" value="C:cytosol"/>
    <property type="evidence" value="ECO:0000318"/>
    <property type="project" value="GO_Central"/>
</dbReference>
<dbReference type="GO" id="GO:0005524">
    <property type="term" value="F:ATP binding"/>
    <property type="evidence" value="ECO:0000250"/>
    <property type="project" value="UniProtKB"/>
</dbReference>
<dbReference type="GO" id="GO:0016887">
    <property type="term" value="F:ATP hydrolysis activity"/>
    <property type="evidence" value="ECO:0007669"/>
    <property type="project" value="RHEA"/>
</dbReference>
<dbReference type="GO" id="GO:0003723">
    <property type="term" value="F:RNA binding"/>
    <property type="evidence" value="ECO:0000250"/>
    <property type="project" value="UniProtKB"/>
</dbReference>
<dbReference type="GO" id="GO:0003724">
    <property type="term" value="F:RNA helicase activity"/>
    <property type="evidence" value="ECO:0000250"/>
    <property type="project" value="UniProtKB"/>
</dbReference>
<dbReference type="GO" id="GO:0033592">
    <property type="term" value="F:RNA strand annealing activity"/>
    <property type="evidence" value="ECO:0000318"/>
    <property type="project" value="GO_Central"/>
</dbReference>
<dbReference type="GO" id="GO:0009409">
    <property type="term" value="P:response to cold"/>
    <property type="evidence" value="ECO:0000318"/>
    <property type="project" value="GO_Central"/>
</dbReference>
<dbReference type="GO" id="GO:0006401">
    <property type="term" value="P:RNA catabolic process"/>
    <property type="evidence" value="ECO:0007669"/>
    <property type="project" value="UniProtKB-UniRule"/>
</dbReference>
<dbReference type="CDD" id="cd00268">
    <property type="entry name" value="DEADc"/>
    <property type="match status" value="1"/>
</dbReference>
<dbReference type="CDD" id="cd18787">
    <property type="entry name" value="SF2_C_DEAD"/>
    <property type="match status" value="1"/>
</dbReference>
<dbReference type="FunFam" id="3.40.50.300:FF:000108">
    <property type="entry name" value="ATP-dependent RNA helicase RhlE"/>
    <property type="match status" value="1"/>
</dbReference>
<dbReference type="FunFam" id="3.40.50.300:FF:000783">
    <property type="entry name" value="DEAD-box ATP-dependent RNA helicase CshA"/>
    <property type="match status" value="1"/>
</dbReference>
<dbReference type="Gene3D" id="3.40.50.300">
    <property type="entry name" value="P-loop containing nucleotide triphosphate hydrolases"/>
    <property type="match status" value="2"/>
</dbReference>
<dbReference type="HAMAP" id="MF_01493">
    <property type="entry name" value="DEAD_helicase_CshA"/>
    <property type="match status" value="1"/>
</dbReference>
<dbReference type="InterPro" id="IPR011545">
    <property type="entry name" value="DEAD/DEAH_box_helicase_dom"/>
</dbReference>
<dbReference type="InterPro" id="IPR050547">
    <property type="entry name" value="DEAD_box_RNA_helicases"/>
</dbReference>
<dbReference type="InterPro" id="IPR030880">
    <property type="entry name" value="DEAD_helicase_CshA"/>
</dbReference>
<dbReference type="InterPro" id="IPR014001">
    <property type="entry name" value="Helicase_ATP-bd"/>
</dbReference>
<dbReference type="InterPro" id="IPR001650">
    <property type="entry name" value="Helicase_C-like"/>
</dbReference>
<dbReference type="InterPro" id="IPR027417">
    <property type="entry name" value="P-loop_NTPase"/>
</dbReference>
<dbReference type="InterPro" id="IPR000629">
    <property type="entry name" value="RNA-helicase_DEAD-box_CS"/>
</dbReference>
<dbReference type="InterPro" id="IPR014014">
    <property type="entry name" value="RNA_helicase_DEAD_Q_motif"/>
</dbReference>
<dbReference type="PANTHER" id="PTHR47963">
    <property type="entry name" value="DEAD-BOX ATP-DEPENDENT RNA HELICASE 47, MITOCHONDRIAL"/>
    <property type="match status" value="1"/>
</dbReference>
<dbReference type="PANTHER" id="PTHR47963:SF5">
    <property type="entry name" value="DEAD-BOX ATP-DEPENDENT RNA HELICASE CSHA"/>
    <property type="match status" value="1"/>
</dbReference>
<dbReference type="Pfam" id="PF00270">
    <property type="entry name" value="DEAD"/>
    <property type="match status" value="1"/>
</dbReference>
<dbReference type="Pfam" id="PF25399">
    <property type="entry name" value="DeaD_dimer"/>
    <property type="match status" value="1"/>
</dbReference>
<dbReference type="Pfam" id="PF00271">
    <property type="entry name" value="Helicase_C"/>
    <property type="match status" value="1"/>
</dbReference>
<dbReference type="SMART" id="SM00487">
    <property type="entry name" value="DEXDc"/>
    <property type="match status" value="1"/>
</dbReference>
<dbReference type="SMART" id="SM00490">
    <property type="entry name" value="HELICc"/>
    <property type="match status" value="1"/>
</dbReference>
<dbReference type="SUPFAM" id="SSF52540">
    <property type="entry name" value="P-loop containing nucleoside triphosphate hydrolases"/>
    <property type="match status" value="1"/>
</dbReference>
<dbReference type="PROSITE" id="PS00039">
    <property type="entry name" value="DEAD_ATP_HELICASE"/>
    <property type="match status" value="1"/>
</dbReference>
<dbReference type="PROSITE" id="PS51192">
    <property type="entry name" value="HELICASE_ATP_BIND_1"/>
    <property type="match status" value="1"/>
</dbReference>
<dbReference type="PROSITE" id="PS51194">
    <property type="entry name" value="HELICASE_CTER"/>
    <property type="match status" value="1"/>
</dbReference>
<dbReference type="PROSITE" id="PS51195">
    <property type="entry name" value="Q_MOTIF"/>
    <property type="match status" value="1"/>
</dbReference>